<proteinExistence type="inferred from homology"/>
<dbReference type="EC" id="2.1.3.2" evidence="1"/>
<dbReference type="EMBL" id="CP000412">
    <property type="protein sequence ID" value="ABJ59347.1"/>
    <property type="molecule type" value="Genomic_DNA"/>
</dbReference>
<dbReference type="RefSeq" id="WP_011678673.1">
    <property type="nucleotide sequence ID" value="NC_008529.1"/>
</dbReference>
<dbReference type="SMR" id="Q047M5"/>
<dbReference type="KEGG" id="lbu:LBUL_1953"/>
<dbReference type="HOGENOM" id="CLU_043846_2_1_9"/>
<dbReference type="BioCyc" id="LDEL321956:LBUL_RS09225-MONOMER"/>
<dbReference type="UniPathway" id="UPA00070">
    <property type="reaction ID" value="UER00116"/>
</dbReference>
<dbReference type="GO" id="GO:0005829">
    <property type="term" value="C:cytosol"/>
    <property type="evidence" value="ECO:0007669"/>
    <property type="project" value="TreeGrafter"/>
</dbReference>
<dbReference type="GO" id="GO:0016597">
    <property type="term" value="F:amino acid binding"/>
    <property type="evidence" value="ECO:0007669"/>
    <property type="project" value="InterPro"/>
</dbReference>
<dbReference type="GO" id="GO:0004070">
    <property type="term" value="F:aspartate carbamoyltransferase activity"/>
    <property type="evidence" value="ECO:0007669"/>
    <property type="project" value="UniProtKB-UniRule"/>
</dbReference>
<dbReference type="GO" id="GO:0006207">
    <property type="term" value="P:'de novo' pyrimidine nucleobase biosynthetic process"/>
    <property type="evidence" value="ECO:0007669"/>
    <property type="project" value="InterPro"/>
</dbReference>
<dbReference type="GO" id="GO:0044205">
    <property type="term" value="P:'de novo' UMP biosynthetic process"/>
    <property type="evidence" value="ECO:0007669"/>
    <property type="project" value="UniProtKB-UniRule"/>
</dbReference>
<dbReference type="GO" id="GO:0006520">
    <property type="term" value="P:amino acid metabolic process"/>
    <property type="evidence" value="ECO:0007669"/>
    <property type="project" value="InterPro"/>
</dbReference>
<dbReference type="FunFam" id="3.40.50.1370:FF:000011">
    <property type="entry name" value="Aspartate carbamoyltransferase"/>
    <property type="match status" value="1"/>
</dbReference>
<dbReference type="Gene3D" id="3.40.50.1370">
    <property type="entry name" value="Aspartate/ornithine carbamoyltransferase"/>
    <property type="match status" value="2"/>
</dbReference>
<dbReference type="HAMAP" id="MF_00001">
    <property type="entry name" value="Asp_carb_tr"/>
    <property type="match status" value="1"/>
</dbReference>
<dbReference type="InterPro" id="IPR006132">
    <property type="entry name" value="Asp/Orn_carbamoyltranf_P-bd"/>
</dbReference>
<dbReference type="InterPro" id="IPR006130">
    <property type="entry name" value="Asp/Orn_carbamoylTrfase"/>
</dbReference>
<dbReference type="InterPro" id="IPR036901">
    <property type="entry name" value="Asp/Orn_carbamoylTrfase_sf"/>
</dbReference>
<dbReference type="InterPro" id="IPR002082">
    <property type="entry name" value="Asp_carbamoyltransf"/>
</dbReference>
<dbReference type="InterPro" id="IPR006131">
    <property type="entry name" value="Asp_carbamoyltransf_Asp/Orn-bd"/>
</dbReference>
<dbReference type="NCBIfam" id="TIGR00670">
    <property type="entry name" value="asp_carb_tr"/>
    <property type="match status" value="1"/>
</dbReference>
<dbReference type="NCBIfam" id="NF002032">
    <property type="entry name" value="PRK00856.1"/>
    <property type="match status" value="1"/>
</dbReference>
<dbReference type="PANTHER" id="PTHR45753:SF6">
    <property type="entry name" value="ASPARTATE CARBAMOYLTRANSFERASE"/>
    <property type="match status" value="1"/>
</dbReference>
<dbReference type="PANTHER" id="PTHR45753">
    <property type="entry name" value="ORNITHINE CARBAMOYLTRANSFERASE, MITOCHONDRIAL"/>
    <property type="match status" value="1"/>
</dbReference>
<dbReference type="Pfam" id="PF00185">
    <property type="entry name" value="OTCace"/>
    <property type="match status" value="1"/>
</dbReference>
<dbReference type="Pfam" id="PF02729">
    <property type="entry name" value="OTCace_N"/>
    <property type="match status" value="1"/>
</dbReference>
<dbReference type="PRINTS" id="PR00100">
    <property type="entry name" value="AOTCASE"/>
</dbReference>
<dbReference type="PRINTS" id="PR00101">
    <property type="entry name" value="ATCASE"/>
</dbReference>
<dbReference type="SUPFAM" id="SSF53671">
    <property type="entry name" value="Aspartate/ornithine carbamoyltransferase"/>
    <property type="match status" value="1"/>
</dbReference>
<evidence type="ECO:0000255" key="1">
    <source>
        <dbReference type="HAMAP-Rule" id="MF_00001"/>
    </source>
</evidence>
<gene>
    <name evidence="1" type="primary">pyrB</name>
    <name type="ordered locus">LBUL_1953</name>
</gene>
<keyword id="KW-0665">Pyrimidine biosynthesis</keyword>
<keyword id="KW-0808">Transferase</keyword>
<protein>
    <recommendedName>
        <fullName evidence="1">Aspartate carbamoyltransferase catalytic subunit</fullName>
        <ecNumber evidence="1">2.1.3.2</ecNumber>
    </recommendedName>
    <alternativeName>
        <fullName evidence="1">Aspartate transcarbamylase</fullName>
        <shortName evidence="1">ATCase</shortName>
    </alternativeName>
</protein>
<reference key="1">
    <citation type="journal article" date="2006" name="Proc. Natl. Acad. Sci. U.S.A.">
        <title>Comparative genomics of the lactic acid bacteria.</title>
        <authorList>
            <person name="Makarova K.S."/>
            <person name="Slesarev A."/>
            <person name="Wolf Y.I."/>
            <person name="Sorokin A."/>
            <person name="Mirkin B."/>
            <person name="Koonin E.V."/>
            <person name="Pavlov A."/>
            <person name="Pavlova N."/>
            <person name="Karamychev V."/>
            <person name="Polouchine N."/>
            <person name="Shakhova V."/>
            <person name="Grigoriev I."/>
            <person name="Lou Y."/>
            <person name="Rohksar D."/>
            <person name="Lucas S."/>
            <person name="Huang K."/>
            <person name="Goodstein D.M."/>
            <person name="Hawkins T."/>
            <person name="Plengvidhya V."/>
            <person name="Welker D."/>
            <person name="Hughes J."/>
            <person name="Goh Y."/>
            <person name="Benson A."/>
            <person name="Baldwin K."/>
            <person name="Lee J.-H."/>
            <person name="Diaz-Muniz I."/>
            <person name="Dosti B."/>
            <person name="Smeianov V."/>
            <person name="Wechter W."/>
            <person name="Barabote R."/>
            <person name="Lorca G."/>
            <person name="Altermann E."/>
            <person name="Barrangou R."/>
            <person name="Ganesan B."/>
            <person name="Xie Y."/>
            <person name="Rawsthorne H."/>
            <person name="Tamir D."/>
            <person name="Parker C."/>
            <person name="Breidt F."/>
            <person name="Broadbent J.R."/>
            <person name="Hutkins R."/>
            <person name="O'Sullivan D."/>
            <person name="Steele J."/>
            <person name="Unlu G."/>
            <person name="Saier M.H. Jr."/>
            <person name="Klaenhammer T."/>
            <person name="Richardson P."/>
            <person name="Kozyavkin S."/>
            <person name="Weimer B.C."/>
            <person name="Mills D.A."/>
        </authorList>
    </citation>
    <scope>NUCLEOTIDE SEQUENCE [LARGE SCALE GENOMIC DNA]</scope>
    <source>
        <strain>ATCC BAA-365 / Lb-18</strain>
    </source>
</reference>
<sequence>MKKLNLVALPHFVSVENLKNDEVKALIKRAEYFKKGGAVARLTSPVYVTNMFFEDSSRTHTSFEMAERKLGLTVIPFDPAHSSVNKGETLYDTSLVMNALGIDLEVIRHSQNEYYEDLINLKQHQKLNIGVINAGDGSGQHPSQCMLDMMTIHEHFGHFKGLKVAIVGDITNSRVAKSDMELLTKLGAEVYFSGPECWYSEEFDQYGKHEELDKLIPKMDVMMLLRVQHERHSGDPNEKKFDAHRYHEKYGINHKRYEAMKKDAIIMHPGPINHDVELSGDLVESDKCMFVRQMENGVFMRMAMLEAVLRGRKLGGLE</sequence>
<feature type="chain" id="PRO_0000301583" description="Aspartate carbamoyltransferase catalytic subunit">
    <location>
        <begin position="1"/>
        <end position="318"/>
    </location>
</feature>
<feature type="binding site" evidence="1">
    <location>
        <position position="58"/>
    </location>
    <ligand>
        <name>carbamoyl phosphate</name>
        <dbReference type="ChEBI" id="CHEBI:58228"/>
    </ligand>
</feature>
<feature type="binding site" evidence="1">
    <location>
        <position position="59"/>
    </location>
    <ligand>
        <name>carbamoyl phosphate</name>
        <dbReference type="ChEBI" id="CHEBI:58228"/>
    </ligand>
</feature>
<feature type="binding site" evidence="1">
    <location>
        <position position="86"/>
    </location>
    <ligand>
        <name>L-aspartate</name>
        <dbReference type="ChEBI" id="CHEBI:29991"/>
    </ligand>
</feature>
<feature type="binding site" evidence="1">
    <location>
        <position position="108"/>
    </location>
    <ligand>
        <name>carbamoyl phosphate</name>
        <dbReference type="ChEBI" id="CHEBI:58228"/>
    </ligand>
</feature>
<feature type="binding site" evidence="1">
    <location>
        <position position="141"/>
    </location>
    <ligand>
        <name>carbamoyl phosphate</name>
        <dbReference type="ChEBI" id="CHEBI:58228"/>
    </ligand>
</feature>
<feature type="binding site" evidence="1">
    <location>
        <position position="144"/>
    </location>
    <ligand>
        <name>carbamoyl phosphate</name>
        <dbReference type="ChEBI" id="CHEBI:58228"/>
    </ligand>
</feature>
<feature type="binding site" evidence="1">
    <location>
        <position position="174"/>
    </location>
    <ligand>
        <name>L-aspartate</name>
        <dbReference type="ChEBI" id="CHEBI:29991"/>
    </ligand>
</feature>
<feature type="binding site" evidence="1">
    <location>
        <position position="226"/>
    </location>
    <ligand>
        <name>L-aspartate</name>
        <dbReference type="ChEBI" id="CHEBI:29991"/>
    </ligand>
</feature>
<feature type="binding site" evidence="1">
    <location>
        <position position="270"/>
    </location>
    <ligand>
        <name>carbamoyl phosphate</name>
        <dbReference type="ChEBI" id="CHEBI:58228"/>
    </ligand>
</feature>
<feature type="binding site" evidence="1">
    <location>
        <position position="271"/>
    </location>
    <ligand>
        <name>carbamoyl phosphate</name>
        <dbReference type="ChEBI" id="CHEBI:58228"/>
    </ligand>
</feature>
<name>PYRB_LACDB</name>
<organism>
    <name type="scientific">Lactobacillus delbrueckii subsp. bulgaricus (strain ATCC BAA-365 / Lb-18)</name>
    <dbReference type="NCBI Taxonomy" id="321956"/>
    <lineage>
        <taxon>Bacteria</taxon>
        <taxon>Bacillati</taxon>
        <taxon>Bacillota</taxon>
        <taxon>Bacilli</taxon>
        <taxon>Lactobacillales</taxon>
        <taxon>Lactobacillaceae</taxon>
        <taxon>Lactobacillus</taxon>
    </lineage>
</organism>
<accession>Q047M5</accession>
<comment type="function">
    <text evidence="1">Catalyzes the condensation of carbamoyl phosphate and aspartate to form carbamoyl aspartate and inorganic phosphate, the committed step in the de novo pyrimidine nucleotide biosynthesis pathway.</text>
</comment>
<comment type="catalytic activity">
    <reaction evidence="1">
        <text>carbamoyl phosphate + L-aspartate = N-carbamoyl-L-aspartate + phosphate + H(+)</text>
        <dbReference type="Rhea" id="RHEA:20013"/>
        <dbReference type="ChEBI" id="CHEBI:15378"/>
        <dbReference type="ChEBI" id="CHEBI:29991"/>
        <dbReference type="ChEBI" id="CHEBI:32814"/>
        <dbReference type="ChEBI" id="CHEBI:43474"/>
        <dbReference type="ChEBI" id="CHEBI:58228"/>
        <dbReference type="EC" id="2.1.3.2"/>
    </reaction>
</comment>
<comment type="pathway">
    <text evidence="1">Pyrimidine metabolism; UMP biosynthesis via de novo pathway; (S)-dihydroorotate from bicarbonate: step 2/3.</text>
</comment>
<comment type="subunit">
    <text evidence="1">Heterododecamer (2C3:3R2) of six catalytic PyrB chains organized as two trimers (C3), and six regulatory PyrI chains organized as three dimers (R2).</text>
</comment>
<comment type="similarity">
    <text evidence="1">Belongs to the aspartate/ornithine carbamoyltransferase superfamily. ATCase family.</text>
</comment>